<name>SUS2_TULGE</name>
<evidence type="ECO:0000250" key="1">
    <source>
        <dbReference type="UniProtKB" id="P49040"/>
    </source>
</evidence>
<evidence type="ECO:0000305" key="2"/>
<feature type="chain" id="PRO_0000204665" description="Sucrose synthase 2">
    <location>
        <begin position="1"/>
        <end position="820"/>
    </location>
</feature>
<feature type="region of interest" description="GT-B glycosyltransferase" evidence="1">
    <location>
        <begin position="276"/>
        <end position="753"/>
    </location>
</feature>
<organism>
    <name type="scientific">Tulipa gesneriana</name>
    <name type="common">Garden tulip</name>
    <dbReference type="NCBI Taxonomy" id="13306"/>
    <lineage>
        <taxon>Eukaryota</taxon>
        <taxon>Viridiplantae</taxon>
        <taxon>Streptophyta</taxon>
        <taxon>Embryophyta</taxon>
        <taxon>Tracheophyta</taxon>
        <taxon>Spermatophyta</taxon>
        <taxon>Magnoliopsida</taxon>
        <taxon>Liliopsida</taxon>
        <taxon>Liliales</taxon>
        <taxon>Liliaceae</taxon>
        <taxon>Tulipa</taxon>
    </lineage>
</organism>
<sequence>MADRAMTRVHSVRERLTDTLSAHKNELLALFSRFVKQGQGMLQPHQLLTEYEAVIPAADREKLKDGVFEDVLKAAQEAIVIPPWVALAIRPRPGVWEYVRVNVSELAVEELTVPEYLQFKEELVDGSGQSNFTLELDFEPFNASFPRPSLSKSIGNGVQFLNRHLSSKLFHDKESMYPLLNFLKEHHYNGTSMMLNDRIQTLGALQASLRRADEYVLSLPLDTPYSDFGHRFQELGLEKGWGDNAKRVHENLHLLLDLLEAPDPCTLENFLGTIPMVFNVVILSPHGYFAQANVLGYPDTGGQVVYILDQVRAMESEMLLRIKQQGLDITPRILIVTRLLPDAVGTTCGQRLEKVLGTEHTHILRVPFRTEHGILRKWISRFEVWPYLETYAEDVANEVAGELQATPDLIIGNYSDGNLVASLMAHKLGVTQCTIAHALEKTKYPNSDLYWKKFEKQYHFSCQFTADLIAMNHADFIITSTFQEIAGSKDTVGQYESHTGFTLPGLYRVVHGIDVFDPKFNIVSPGADMSIYFPYTEAEKRLTALHPEIEELLYSSAESTEYKFGLKDKTKPIIFSMARLDRVKNMTGLVELYAKNDRLKELVNLVVVCGDHAKASKDLEEQAELKKMYSLIEEYKLDGHIRWISAQMNRVRNGELYRYIADSKGVFVQPAFYEAFGLTVVESMTCGLPTFATCHGGPAEIIVHGVSGYHIDPYHGDKAAELLVDFFEKSKKDQTHWDAISNGGLKRIYEKYTWKIYSERLLTLAGVYGFWKYVSNLDRRETKRYLEMFYALKYRNLAKSVPLAVDGEAAVNGKICTLGC</sequence>
<proteinExistence type="evidence at transcript level"/>
<reference key="1">
    <citation type="submission" date="1996-03" db="EMBL/GenBank/DDBJ databases">
        <authorList>
            <person name="Balk P.A."/>
            <person name="de Boer A.D."/>
        </authorList>
    </citation>
    <scope>NUCLEOTIDE SEQUENCE [MRNA]</scope>
    <source>
        <strain>cv. Apeldoorn</strain>
    </source>
</reference>
<accession>Q41607</accession>
<comment type="function">
    <text>Sucrose-cleaving enzyme that provides UDP-glucose and fructose for various metabolic pathways.</text>
</comment>
<comment type="catalytic activity">
    <reaction>
        <text>an NDP-alpha-D-glucose + D-fructose = a ribonucleoside 5'-diphosphate + sucrose + H(+)</text>
        <dbReference type="Rhea" id="RHEA:16241"/>
        <dbReference type="ChEBI" id="CHEBI:15378"/>
        <dbReference type="ChEBI" id="CHEBI:17992"/>
        <dbReference type="ChEBI" id="CHEBI:37721"/>
        <dbReference type="ChEBI" id="CHEBI:57930"/>
        <dbReference type="ChEBI" id="CHEBI:76533"/>
        <dbReference type="EC" id="2.4.1.13"/>
    </reaction>
</comment>
<comment type="similarity">
    <text evidence="2">Belongs to the glycosyltransferase 1 family. Plant sucrose synthase subfamily.</text>
</comment>
<dbReference type="EC" id="2.4.1.13"/>
<dbReference type="EMBL" id="X96939">
    <property type="protein sequence ID" value="CAA65640.1"/>
    <property type="molecule type" value="mRNA"/>
</dbReference>
<dbReference type="SMR" id="Q41607"/>
<dbReference type="CAZy" id="GT4">
    <property type="family name" value="Glycosyltransferase Family 4"/>
</dbReference>
<dbReference type="GO" id="GO:0016157">
    <property type="term" value="F:sucrose synthase activity"/>
    <property type="evidence" value="ECO:0007669"/>
    <property type="project" value="UniProtKB-EC"/>
</dbReference>
<dbReference type="GO" id="GO:0005985">
    <property type="term" value="P:sucrose metabolic process"/>
    <property type="evidence" value="ECO:0007669"/>
    <property type="project" value="InterPro"/>
</dbReference>
<dbReference type="FunFam" id="1.20.120.1230:FF:000001">
    <property type="entry name" value="Sucrose synthase"/>
    <property type="match status" value="1"/>
</dbReference>
<dbReference type="FunFam" id="3.10.450.330:FF:000001">
    <property type="entry name" value="Sucrose synthase"/>
    <property type="match status" value="1"/>
</dbReference>
<dbReference type="FunFam" id="3.40.50.2000:FF:000004">
    <property type="entry name" value="Sucrose synthase"/>
    <property type="match status" value="1"/>
</dbReference>
<dbReference type="Gene3D" id="1.20.120.1230">
    <property type="match status" value="1"/>
</dbReference>
<dbReference type="Gene3D" id="3.10.450.330">
    <property type="match status" value="1"/>
</dbReference>
<dbReference type="Gene3D" id="3.40.50.2000">
    <property type="entry name" value="Glycogen Phosphorylase B"/>
    <property type="match status" value="2"/>
</dbReference>
<dbReference type="InterPro" id="IPR001296">
    <property type="entry name" value="Glyco_trans_1"/>
</dbReference>
<dbReference type="InterPro" id="IPR000368">
    <property type="entry name" value="Sucrose_synth_GT-B1"/>
</dbReference>
<dbReference type="InterPro" id="IPR012820">
    <property type="entry name" value="Sucrose_synthase_pln/cyn"/>
</dbReference>
<dbReference type="InterPro" id="IPR056736">
    <property type="entry name" value="SUS_EPBD"/>
</dbReference>
<dbReference type="InterPro" id="IPR056735">
    <property type="entry name" value="SUS_N"/>
</dbReference>
<dbReference type="NCBIfam" id="TIGR02470">
    <property type="entry name" value="sucr_synth"/>
    <property type="match status" value="1"/>
</dbReference>
<dbReference type="PANTHER" id="PTHR45839">
    <property type="match status" value="1"/>
</dbReference>
<dbReference type="PANTHER" id="PTHR45839:SF29">
    <property type="entry name" value="SUCROSE SYNTHASE 1"/>
    <property type="match status" value="1"/>
</dbReference>
<dbReference type="Pfam" id="PF00534">
    <property type="entry name" value="Glycos_transf_1"/>
    <property type="match status" value="1"/>
</dbReference>
<dbReference type="Pfam" id="PF00862">
    <property type="entry name" value="GT-B_Sucrose_synth"/>
    <property type="match status" value="1"/>
</dbReference>
<dbReference type="Pfam" id="PF24862">
    <property type="entry name" value="SUS_EPBD"/>
    <property type="match status" value="1"/>
</dbReference>
<dbReference type="Pfam" id="PF24861">
    <property type="entry name" value="SUS_N"/>
    <property type="match status" value="1"/>
</dbReference>
<dbReference type="SUPFAM" id="SSF53756">
    <property type="entry name" value="UDP-Glycosyltransferase/glycogen phosphorylase"/>
    <property type="match status" value="1"/>
</dbReference>
<keyword id="KW-0328">Glycosyltransferase</keyword>
<keyword id="KW-0808">Transferase</keyword>
<protein>
    <recommendedName>
        <fullName>Sucrose synthase 2</fullName>
        <ecNumber>2.4.1.13</ecNumber>
    </recommendedName>
    <alternativeName>
        <fullName>Sucrose-UDP glucosyltransferase 2</fullName>
    </alternativeName>
</protein>